<dbReference type="EMBL" id="AC010606">
    <property type="status" value="NOT_ANNOTATED_CDS"/>
    <property type="molecule type" value="Genomic_DNA"/>
</dbReference>
<dbReference type="CCDS" id="CCDS45942.1"/>
<dbReference type="RefSeq" id="NP_001129979.1">
    <property type="nucleotide sequence ID" value="NM_001136507.2"/>
</dbReference>
<dbReference type="SMR" id="A6NJ08"/>
<dbReference type="BioGRID" id="129874">
    <property type="interactions" value="1"/>
</dbReference>
<dbReference type="FunCoup" id="A6NJ08">
    <property type="interactions" value="275"/>
</dbReference>
<dbReference type="STRING" id="9606.ENSP00000331435"/>
<dbReference type="GlyGen" id="A6NJ08">
    <property type="glycosylation" value="2 sites"/>
</dbReference>
<dbReference type="BioMuta" id="MBD3L5"/>
<dbReference type="MassIVE" id="A6NJ08"/>
<dbReference type="PaxDb" id="9606-ENSP00000331435"/>
<dbReference type="ProteomicsDB" id="1300"/>
<dbReference type="Antibodypedia" id="56497">
    <property type="antibodies" value="2 antibodies from 2 providers"/>
</dbReference>
<dbReference type="DNASU" id="284428"/>
<dbReference type="Ensembl" id="ENST00000329753.5">
    <property type="protein sequence ID" value="ENSP00000331435.4"/>
    <property type="gene ID" value="ENSG00000237247.6"/>
</dbReference>
<dbReference type="GeneID" id="284428"/>
<dbReference type="KEGG" id="hsa:284428"/>
<dbReference type="MANE-Select" id="ENST00000329753.5">
    <property type="protein sequence ID" value="ENSP00000331435.4"/>
    <property type="RefSeq nucleotide sequence ID" value="NM_001136507.2"/>
    <property type="RefSeq protein sequence ID" value="NP_001129979.1"/>
</dbReference>
<dbReference type="UCSC" id="uc010xjl.3">
    <property type="organism name" value="human"/>
</dbReference>
<dbReference type="AGR" id="HGNC:37204"/>
<dbReference type="CTD" id="284428"/>
<dbReference type="GeneCards" id="MBD3L5"/>
<dbReference type="HGNC" id="HGNC:37204">
    <property type="gene designation" value="MBD3L5"/>
</dbReference>
<dbReference type="HPA" id="ENSG00000237247">
    <property type="expression patterns" value="Not detected"/>
</dbReference>
<dbReference type="neXtProt" id="NX_A6NJ08"/>
<dbReference type="VEuPathDB" id="HostDB:ENSG00000237247"/>
<dbReference type="eggNOG" id="KOG4161">
    <property type="taxonomic scope" value="Eukaryota"/>
</dbReference>
<dbReference type="GeneTree" id="ENSGT00950000183005"/>
<dbReference type="InParanoid" id="A6NJ08"/>
<dbReference type="OMA" id="YSSNMAE"/>
<dbReference type="OrthoDB" id="13533at9604"/>
<dbReference type="PAN-GO" id="A6NJ08">
    <property type="GO annotations" value="0 GO annotations based on evolutionary models"/>
</dbReference>
<dbReference type="PhylomeDB" id="A6NJ08"/>
<dbReference type="TreeFam" id="TF325032"/>
<dbReference type="PathwayCommons" id="A6NJ08"/>
<dbReference type="BioGRID-ORCS" id="284428">
    <property type="hits" value="18 hits in 644 CRISPR screens"/>
</dbReference>
<dbReference type="GenomeRNAi" id="284428"/>
<dbReference type="Pharos" id="A6NJ08">
    <property type="development level" value="Tdark"/>
</dbReference>
<dbReference type="Proteomes" id="UP000005640">
    <property type="component" value="Chromosome 19"/>
</dbReference>
<dbReference type="RNAct" id="A6NJ08">
    <property type="molecule type" value="protein"/>
</dbReference>
<dbReference type="Bgee" id="ENSG00000237247">
    <property type="expression patterns" value="Expressed in primordial germ cell in gonad and 2 other cell types or tissues"/>
</dbReference>
<dbReference type="GO" id="GO:0005634">
    <property type="term" value="C:nucleus"/>
    <property type="evidence" value="ECO:0000318"/>
    <property type="project" value="GO_Central"/>
</dbReference>
<dbReference type="GO" id="GO:0008327">
    <property type="term" value="F:methyl-CpG binding"/>
    <property type="evidence" value="ECO:0000318"/>
    <property type="project" value="GO_Central"/>
</dbReference>
<dbReference type="GO" id="GO:0006346">
    <property type="term" value="P:DNA methylation-dependent constitutive heterochromatin formation"/>
    <property type="evidence" value="ECO:0000318"/>
    <property type="project" value="GO_Central"/>
</dbReference>
<dbReference type="GO" id="GO:0000122">
    <property type="term" value="P:negative regulation of transcription by RNA polymerase II"/>
    <property type="evidence" value="ECO:0000318"/>
    <property type="project" value="GO_Central"/>
</dbReference>
<dbReference type="InterPro" id="IPR032343">
    <property type="entry name" value="MBD2/MBD3_p55-bd"/>
</dbReference>
<dbReference type="InterPro" id="IPR025884">
    <property type="entry name" value="MeCpG-bd_2/3_C_dom"/>
</dbReference>
<dbReference type="Pfam" id="PF14048">
    <property type="entry name" value="MBD_C"/>
    <property type="match status" value="1"/>
</dbReference>
<dbReference type="Pfam" id="PF16564">
    <property type="entry name" value="MBDa"/>
    <property type="match status" value="1"/>
</dbReference>
<proteinExistence type="inferred from homology"/>
<accession>A6NJ08</accession>
<gene>
    <name type="primary">MBD3L5</name>
</gene>
<organism>
    <name type="scientific">Homo sapiens</name>
    <name type="common">Human</name>
    <dbReference type="NCBI Taxonomy" id="9606"/>
    <lineage>
        <taxon>Eukaryota</taxon>
        <taxon>Metazoa</taxon>
        <taxon>Chordata</taxon>
        <taxon>Craniata</taxon>
        <taxon>Vertebrata</taxon>
        <taxon>Euteleostomi</taxon>
        <taxon>Mammalia</taxon>
        <taxon>Eutheria</taxon>
        <taxon>Euarchontoglires</taxon>
        <taxon>Primates</taxon>
        <taxon>Haplorrhini</taxon>
        <taxon>Catarrhini</taxon>
        <taxon>Hominidae</taxon>
        <taxon>Homo</taxon>
    </lineage>
</organism>
<sequence length="208" mass="22976">MGEPAFTSFPSPPVLGKLKRNMMPWALQKKREIHMAKAHRRRAARSALPMRLTSCIFRRPVTRIRSHPDNQVRRRKGDEHLEKPQQLCAYRRLQALQPCSSQGEGSSPLHLESVLSILAPGTAGESLDRAGAERVRIPLEPTPGRFPAVAGGPTPGMGCQLPPPLSGQLVTPADIRRQARRVKKARERLAKALQADRLARQAEMLTGG</sequence>
<protein>
    <recommendedName>
        <fullName>Methyl-CpG-binding domain protein 3-like 5</fullName>
        <shortName>MBD3-like protein 5</shortName>
    </recommendedName>
</protein>
<evidence type="ECO:0000305" key="1"/>
<reference key="1">
    <citation type="journal article" date="2004" name="Nature">
        <title>The DNA sequence and biology of human chromosome 19.</title>
        <authorList>
            <person name="Grimwood J."/>
            <person name="Gordon L.A."/>
            <person name="Olsen A.S."/>
            <person name="Terry A."/>
            <person name="Schmutz J."/>
            <person name="Lamerdin J.E."/>
            <person name="Hellsten U."/>
            <person name="Goodstein D."/>
            <person name="Couronne O."/>
            <person name="Tran-Gyamfi M."/>
            <person name="Aerts A."/>
            <person name="Altherr M."/>
            <person name="Ashworth L."/>
            <person name="Bajorek E."/>
            <person name="Black S."/>
            <person name="Branscomb E."/>
            <person name="Caenepeel S."/>
            <person name="Carrano A.V."/>
            <person name="Caoile C."/>
            <person name="Chan Y.M."/>
            <person name="Christensen M."/>
            <person name="Cleland C.A."/>
            <person name="Copeland A."/>
            <person name="Dalin E."/>
            <person name="Dehal P."/>
            <person name="Denys M."/>
            <person name="Detter J.C."/>
            <person name="Escobar J."/>
            <person name="Flowers D."/>
            <person name="Fotopulos D."/>
            <person name="Garcia C."/>
            <person name="Georgescu A.M."/>
            <person name="Glavina T."/>
            <person name="Gomez M."/>
            <person name="Gonzales E."/>
            <person name="Groza M."/>
            <person name="Hammon N."/>
            <person name="Hawkins T."/>
            <person name="Haydu L."/>
            <person name="Ho I."/>
            <person name="Huang W."/>
            <person name="Israni S."/>
            <person name="Jett J."/>
            <person name="Kadner K."/>
            <person name="Kimball H."/>
            <person name="Kobayashi A."/>
            <person name="Larionov V."/>
            <person name="Leem S.-H."/>
            <person name="Lopez F."/>
            <person name="Lou Y."/>
            <person name="Lowry S."/>
            <person name="Malfatti S."/>
            <person name="Martinez D."/>
            <person name="McCready P.M."/>
            <person name="Medina C."/>
            <person name="Morgan J."/>
            <person name="Nelson K."/>
            <person name="Nolan M."/>
            <person name="Ovcharenko I."/>
            <person name="Pitluck S."/>
            <person name="Pollard M."/>
            <person name="Popkie A.P."/>
            <person name="Predki P."/>
            <person name="Quan G."/>
            <person name="Ramirez L."/>
            <person name="Rash S."/>
            <person name="Retterer J."/>
            <person name="Rodriguez A."/>
            <person name="Rogers S."/>
            <person name="Salamov A."/>
            <person name="Salazar A."/>
            <person name="She X."/>
            <person name="Smith D."/>
            <person name="Slezak T."/>
            <person name="Solovyev V."/>
            <person name="Thayer N."/>
            <person name="Tice H."/>
            <person name="Tsai M."/>
            <person name="Ustaszewska A."/>
            <person name="Vo N."/>
            <person name="Wagner M."/>
            <person name="Wheeler J."/>
            <person name="Wu K."/>
            <person name="Xie G."/>
            <person name="Yang J."/>
            <person name="Dubchak I."/>
            <person name="Furey T.S."/>
            <person name="DeJong P."/>
            <person name="Dickson M."/>
            <person name="Gordon D."/>
            <person name="Eichler E.E."/>
            <person name="Pennacchio L.A."/>
            <person name="Richardson P."/>
            <person name="Stubbs L."/>
            <person name="Rokhsar D.S."/>
            <person name="Myers R.M."/>
            <person name="Rubin E.M."/>
            <person name="Lucas S.M."/>
        </authorList>
    </citation>
    <scope>NUCLEOTIDE SEQUENCE [LARGE SCALE GENOMIC DNA]</scope>
</reference>
<name>MB3L5_HUMAN</name>
<comment type="miscellaneous">
    <text>The MBD3L proteins are encoded by strongly repeated regions of the 19p13 chromosome. The exact number of functional copies is unclear, and some of them may represent pseudogenes.</text>
</comment>
<comment type="similarity">
    <text evidence="1">Belongs to the MBD3L family.</text>
</comment>
<keyword id="KW-1185">Reference proteome</keyword>
<feature type="chain" id="PRO_0000349235" description="Methyl-CpG-binding domain protein 3-like 5">
    <location>
        <begin position="1"/>
        <end position="208"/>
    </location>
</feature>